<name>CCSA_PYRYE</name>
<evidence type="ECO:0000255" key="1">
    <source>
        <dbReference type="HAMAP-Rule" id="MF_01391"/>
    </source>
</evidence>
<protein>
    <recommendedName>
        <fullName evidence="1">Cytochrome c biogenesis protein CcsA</fullName>
    </recommendedName>
</protein>
<reference key="1">
    <citation type="submission" date="2003-11" db="EMBL/GenBank/DDBJ databases">
        <title>Whole genome sequence of Porphyra yezoensis chloroplast.</title>
        <authorList>
            <person name="Kunimoto M."/>
            <person name="Morishima K."/>
            <person name="Yoshikawa M."/>
            <person name="Fukuda S."/>
            <person name="Kobayashi T."/>
            <person name="Kobayashi M."/>
            <person name="Okazaki T."/>
            <person name="Ohara I."/>
            <person name="Nakayama I."/>
        </authorList>
    </citation>
    <scope>NUCLEOTIDE SEQUENCE [LARGE SCALE GENOMIC DNA]</scope>
    <source>
        <strain>U-51</strain>
    </source>
</reference>
<geneLocation type="chloroplast"/>
<organism>
    <name type="scientific">Pyropia yezoensis</name>
    <name type="common">Susabi-nori</name>
    <name type="synonym">Porphyra yezoensis</name>
    <dbReference type="NCBI Taxonomy" id="2788"/>
    <lineage>
        <taxon>Eukaryota</taxon>
        <taxon>Rhodophyta</taxon>
        <taxon>Bangiophyceae</taxon>
        <taxon>Bangiales</taxon>
        <taxon>Bangiaceae</taxon>
        <taxon>Pyropia</taxon>
    </lineage>
</organism>
<sequence length="319" mass="35226">MNLEIMQNSLVNFAFGGLLIAMLVYWISLAFPGIGGLNRLATLITLLVNIALTLTLSSRWFANGYFPLSNLYESLLFLAWGLTFVHLFIENKTKSRLIGATAIPVAMFVTAFASLALPLEMQKASPLVPALKSNWLMMHVSIMMLSYAILILGSLLSILFLIITKGKDINLKGSSIGTGSYKVKNTDAKSTLIFSSQVGIVQEQSNMLINSTRMNLLESIDNLSYRTIGLGFPLLTIGIIAGAVWANEAWGSYWSWDPKETWALITWLIFAAYLHSRITKSWQGKKPAILASLGFLVVWICYLGVNFLGKGLHSYGWLA</sequence>
<feature type="chain" id="PRO_0000277295" description="Cytochrome c biogenesis protein CcsA">
    <location>
        <begin position="1"/>
        <end position="319"/>
    </location>
</feature>
<feature type="transmembrane region" description="Helical" evidence="1">
    <location>
        <begin position="14"/>
        <end position="34"/>
    </location>
</feature>
<feature type="transmembrane region" description="Helical" evidence="1">
    <location>
        <begin position="36"/>
        <end position="56"/>
    </location>
</feature>
<feature type="transmembrane region" description="Helical" evidence="1">
    <location>
        <begin position="69"/>
        <end position="89"/>
    </location>
</feature>
<feature type="transmembrane region" description="Helical" evidence="1">
    <location>
        <begin position="97"/>
        <end position="117"/>
    </location>
</feature>
<feature type="transmembrane region" description="Helical" evidence="1">
    <location>
        <begin position="142"/>
        <end position="162"/>
    </location>
</feature>
<feature type="transmembrane region" description="Helical" evidence="1">
    <location>
        <begin position="227"/>
        <end position="247"/>
    </location>
</feature>
<feature type="transmembrane region" description="Helical" evidence="1">
    <location>
        <begin position="254"/>
        <end position="274"/>
    </location>
</feature>
<feature type="transmembrane region" description="Helical" evidence="1">
    <location>
        <begin position="288"/>
        <end position="308"/>
    </location>
</feature>
<proteinExistence type="inferred from homology"/>
<keyword id="KW-0150">Chloroplast</keyword>
<keyword id="KW-0201">Cytochrome c-type biogenesis</keyword>
<keyword id="KW-0472">Membrane</keyword>
<keyword id="KW-0934">Plastid</keyword>
<keyword id="KW-0793">Thylakoid</keyword>
<keyword id="KW-0812">Transmembrane</keyword>
<keyword id="KW-1133">Transmembrane helix</keyword>
<dbReference type="EMBL" id="AP006715">
    <property type="protein sequence ID" value="BAE92493.1"/>
    <property type="molecule type" value="Genomic_DNA"/>
</dbReference>
<dbReference type="RefSeq" id="YP_537050.1">
    <property type="nucleotide sequence ID" value="NC_007932.1"/>
</dbReference>
<dbReference type="SMR" id="Q1XDB8"/>
<dbReference type="GeneID" id="3978998"/>
<dbReference type="GO" id="GO:0009535">
    <property type="term" value="C:chloroplast thylakoid membrane"/>
    <property type="evidence" value="ECO:0007669"/>
    <property type="project" value="UniProtKB-SubCell"/>
</dbReference>
<dbReference type="GO" id="GO:0005886">
    <property type="term" value="C:plasma membrane"/>
    <property type="evidence" value="ECO:0007669"/>
    <property type="project" value="TreeGrafter"/>
</dbReference>
<dbReference type="GO" id="GO:0020037">
    <property type="term" value="F:heme binding"/>
    <property type="evidence" value="ECO:0007669"/>
    <property type="project" value="InterPro"/>
</dbReference>
<dbReference type="GO" id="GO:0017004">
    <property type="term" value="P:cytochrome complex assembly"/>
    <property type="evidence" value="ECO:0007669"/>
    <property type="project" value="UniProtKB-UniRule"/>
</dbReference>
<dbReference type="HAMAP" id="MF_01391">
    <property type="entry name" value="CytC_CcsA"/>
    <property type="match status" value="1"/>
</dbReference>
<dbReference type="InterPro" id="IPR002541">
    <property type="entry name" value="Cyt_c_assembly"/>
</dbReference>
<dbReference type="InterPro" id="IPR017562">
    <property type="entry name" value="Cyt_c_biogenesis_CcsA"/>
</dbReference>
<dbReference type="InterPro" id="IPR045062">
    <property type="entry name" value="Cyt_c_biogenesis_CcsA/CcmC"/>
</dbReference>
<dbReference type="NCBIfam" id="TIGR03144">
    <property type="entry name" value="cytochr_II_ccsB"/>
    <property type="match status" value="1"/>
</dbReference>
<dbReference type="PANTHER" id="PTHR30071:SF1">
    <property type="entry name" value="CYTOCHROME B_B6 PROTEIN-RELATED"/>
    <property type="match status" value="1"/>
</dbReference>
<dbReference type="PANTHER" id="PTHR30071">
    <property type="entry name" value="HEME EXPORTER PROTEIN C"/>
    <property type="match status" value="1"/>
</dbReference>
<dbReference type="Pfam" id="PF01578">
    <property type="entry name" value="Cytochrom_C_asm"/>
    <property type="match status" value="1"/>
</dbReference>
<accession>Q1XDB8</accession>
<comment type="function">
    <text evidence="1">Required during biogenesis of c-type cytochromes (cytochrome c6 and cytochrome f) at the step of heme attachment.</text>
</comment>
<comment type="subunit">
    <text evidence="1">May interact with Ccs1.</text>
</comment>
<comment type="subcellular location">
    <subcellularLocation>
        <location evidence="1">Plastid</location>
        <location evidence="1">Chloroplast thylakoid membrane</location>
        <topology evidence="1">Multi-pass membrane protein</topology>
    </subcellularLocation>
</comment>
<comment type="similarity">
    <text evidence="1">Belongs to the CcmF/CycK/Ccl1/NrfE/CcsA family.</text>
</comment>
<gene>
    <name evidence="1" type="primary">ccsA</name>
</gene>